<feature type="chain" id="PRO_0000062966" description="Chaperone protein htpG">
    <location>
        <begin position="1"/>
        <end position="681"/>
    </location>
</feature>
<feature type="region of interest" description="A; substrate-binding" evidence="1">
    <location>
        <begin position="1"/>
        <end position="326"/>
    </location>
</feature>
<feature type="region of interest" description="B" evidence="1">
    <location>
        <begin position="327"/>
        <end position="545"/>
    </location>
</feature>
<feature type="region of interest" description="C" evidence="1">
    <location>
        <begin position="546"/>
        <end position="681"/>
    </location>
</feature>
<reference key="1">
    <citation type="journal article" date="2004" name="Proc. Natl. Acad. Sci. U.S.A.">
        <title>Genomic analysis of Bacteroides fragilis reveals extensive DNA inversions regulating cell surface adaptation.</title>
        <authorList>
            <person name="Kuwahara T."/>
            <person name="Yamashita A."/>
            <person name="Hirakawa H."/>
            <person name="Nakayama H."/>
            <person name="Toh H."/>
            <person name="Okada N."/>
            <person name="Kuhara S."/>
            <person name="Hattori M."/>
            <person name="Hayashi T."/>
            <person name="Ohnishi Y."/>
        </authorList>
    </citation>
    <scope>NUCLEOTIDE SEQUENCE [LARGE SCALE GENOMIC DNA]</scope>
    <source>
        <strain>YCH46</strain>
    </source>
</reference>
<dbReference type="EMBL" id="AP006841">
    <property type="protein sequence ID" value="BAD49158.1"/>
    <property type="molecule type" value="Genomic_DNA"/>
</dbReference>
<dbReference type="RefSeq" id="WP_011202859.1">
    <property type="nucleotide sequence ID" value="NC_006347.1"/>
</dbReference>
<dbReference type="RefSeq" id="YP_099692.1">
    <property type="nucleotide sequence ID" value="NC_006347.1"/>
</dbReference>
<dbReference type="SMR" id="P0CJ84"/>
<dbReference type="STRING" id="295405.BF2409"/>
<dbReference type="KEGG" id="bfr:BF2409"/>
<dbReference type="PATRIC" id="fig|295405.11.peg.2327"/>
<dbReference type="HOGENOM" id="CLU_006684_3_2_10"/>
<dbReference type="OrthoDB" id="9802640at2"/>
<dbReference type="Proteomes" id="UP000002197">
    <property type="component" value="Chromosome"/>
</dbReference>
<dbReference type="GO" id="GO:0005737">
    <property type="term" value="C:cytoplasm"/>
    <property type="evidence" value="ECO:0007669"/>
    <property type="project" value="UniProtKB-SubCell"/>
</dbReference>
<dbReference type="GO" id="GO:0005524">
    <property type="term" value="F:ATP binding"/>
    <property type="evidence" value="ECO:0007669"/>
    <property type="project" value="UniProtKB-UniRule"/>
</dbReference>
<dbReference type="GO" id="GO:0016887">
    <property type="term" value="F:ATP hydrolysis activity"/>
    <property type="evidence" value="ECO:0007669"/>
    <property type="project" value="InterPro"/>
</dbReference>
<dbReference type="GO" id="GO:0140662">
    <property type="term" value="F:ATP-dependent protein folding chaperone"/>
    <property type="evidence" value="ECO:0007669"/>
    <property type="project" value="InterPro"/>
</dbReference>
<dbReference type="GO" id="GO:0051082">
    <property type="term" value="F:unfolded protein binding"/>
    <property type="evidence" value="ECO:0007669"/>
    <property type="project" value="UniProtKB-UniRule"/>
</dbReference>
<dbReference type="CDD" id="cd16927">
    <property type="entry name" value="HATPase_Hsp90-like"/>
    <property type="match status" value="1"/>
</dbReference>
<dbReference type="FunFam" id="3.30.230.80:FF:000008">
    <property type="entry name" value="Molecular chaperone HtpG"/>
    <property type="match status" value="1"/>
</dbReference>
<dbReference type="FunFam" id="3.30.565.10:FF:000076">
    <property type="entry name" value="Molecular chaperone HtpG"/>
    <property type="match status" value="1"/>
</dbReference>
<dbReference type="Gene3D" id="3.30.230.80">
    <property type="match status" value="1"/>
</dbReference>
<dbReference type="Gene3D" id="3.40.50.11260">
    <property type="match status" value="1"/>
</dbReference>
<dbReference type="Gene3D" id="1.20.120.790">
    <property type="entry name" value="Heat shock protein 90, C-terminal domain"/>
    <property type="match status" value="1"/>
</dbReference>
<dbReference type="Gene3D" id="3.30.565.10">
    <property type="entry name" value="Histidine kinase-like ATPase, C-terminal domain"/>
    <property type="match status" value="1"/>
</dbReference>
<dbReference type="HAMAP" id="MF_00505">
    <property type="entry name" value="HSP90"/>
    <property type="match status" value="1"/>
</dbReference>
<dbReference type="InterPro" id="IPR036890">
    <property type="entry name" value="HATPase_C_sf"/>
</dbReference>
<dbReference type="InterPro" id="IPR019805">
    <property type="entry name" value="Heat_shock_protein_90_CS"/>
</dbReference>
<dbReference type="InterPro" id="IPR037196">
    <property type="entry name" value="HSP90_C"/>
</dbReference>
<dbReference type="InterPro" id="IPR001404">
    <property type="entry name" value="Hsp90_fam"/>
</dbReference>
<dbReference type="InterPro" id="IPR020575">
    <property type="entry name" value="Hsp90_N"/>
</dbReference>
<dbReference type="InterPro" id="IPR020568">
    <property type="entry name" value="Ribosomal_Su5_D2-typ_SF"/>
</dbReference>
<dbReference type="NCBIfam" id="NF003555">
    <property type="entry name" value="PRK05218.1"/>
    <property type="match status" value="1"/>
</dbReference>
<dbReference type="PANTHER" id="PTHR11528">
    <property type="entry name" value="HEAT SHOCK PROTEIN 90 FAMILY MEMBER"/>
    <property type="match status" value="1"/>
</dbReference>
<dbReference type="Pfam" id="PF13589">
    <property type="entry name" value="HATPase_c_3"/>
    <property type="match status" value="1"/>
</dbReference>
<dbReference type="Pfam" id="PF00183">
    <property type="entry name" value="HSP90"/>
    <property type="match status" value="1"/>
</dbReference>
<dbReference type="PIRSF" id="PIRSF002583">
    <property type="entry name" value="Hsp90"/>
    <property type="match status" value="1"/>
</dbReference>
<dbReference type="PRINTS" id="PR00775">
    <property type="entry name" value="HEATSHOCK90"/>
</dbReference>
<dbReference type="SUPFAM" id="SSF55874">
    <property type="entry name" value="ATPase domain of HSP90 chaperone/DNA topoisomerase II/histidine kinase"/>
    <property type="match status" value="1"/>
</dbReference>
<dbReference type="SUPFAM" id="SSF54211">
    <property type="entry name" value="Ribosomal protein S5 domain 2-like"/>
    <property type="match status" value="1"/>
</dbReference>
<dbReference type="PROSITE" id="PS00298">
    <property type="entry name" value="HSP90"/>
    <property type="match status" value="1"/>
</dbReference>
<gene>
    <name evidence="1" type="primary">htpG</name>
    <name type="ordered locus">BF2409</name>
</gene>
<proteinExistence type="inferred from homology"/>
<sequence>MQKGNIGVTTENIFPIIKKFLYSDHEIFLRELVSNAVDATQKLNTLASISEFKGELGDLTVHVSLGKDTITISDRGIGLTAEEIDKYINQIAFSGANDFLEKYKNDANAIIGHFGLGFYSAFMVSKKVEIITKSYKEGAQAVKWTCDGSPEFTLEEVEKADRGTDIVLYIDDDCKEFLEESRISALLKKYCSFLPVPIAFGKKKEWKDGKQVETAEDNVINDTIPLWTKKPSELSDEDYKKFYRELYPMSDEPLFWIHLNVDYPFHLTGILYFPKVKSNIDLNKNKIQLYCNQVYVTDSVEGIVPDFLTLLHGVLDSPDIPLNVSRSYLQSDSNVKKISTYISKKVSDRLQSIFKNDRAQFEEKWNDLKIFINYGMLTQEDFYDKAQKFALFTDTDGKYYTFEEYQTLIKDNQTDKDKNLIYLYANNKDEQFAYIEAAKNKGYNVLLMDGQLDVAMVSMLEQKLEKSRFTRVDSDVVDNLIVKEDKKSDVLEASKQEALSAAFKSQLPKMEKVEFNVMTQALGENGSPVMITQSEYMRRMKEMANIQAGMSFYGEMPDMFNLVLNSDHKLVKEVLADEEKECSAAIAPIQTELEDVTKRRDALKKKQEGKKDEDIPTVEKDELNDLDKKWDELKQQKDSIFAGYAGKNKVVRQLIDLALLQNNMLKGEALNNFVKRSIELI</sequence>
<evidence type="ECO:0000255" key="1">
    <source>
        <dbReference type="HAMAP-Rule" id="MF_00505"/>
    </source>
</evidence>
<protein>
    <recommendedName>
        <fullName>Chaperone protein htpG</fullName>
    </recommendedName>
    <alternativeName>
        <fullName>Heat shock protein htpG</fullName>
    </alternativeName>
    <alternativeName>
        <fullName evidence="1">High temperature protein G</fullName>
    </alternativeName>
</protein>
<accession>P0CJ84</accession>
<accession>P58476</accession>
<accession>Q64TM1</accession>
<keyword id="KW-0067">ATP-binding</keyword>
<keyword id="KW-0143">Chaperone</keyword>
<keyword id="KW-0963">Cytoplasm</keyword>
<keyword id="KW-0547">Nucleotide-binding</keyword>
<keyword id="KW-0346">Stress response</keyword>
<comment type="function">
    <text evidence="1">Molecular chaperone. Has ATPase activity.</text>
</comment>
<comment type="subunit">
    <text evidence="1">Homodimer.</text>
</comment>
<comment type="subcellular location">
    <subcellularLocation>
        <location evidence="1">Cytoplasm</location>
    </subcellularLocation>
</comment>
<comment type="similarity">
    <text evidence="1">Belongs to the heat shock protein 90 family.</text>
</comment>
<name>HTPG_BACFR</name>
<organism>
    <name type="scientific">Bacteroides fragilis (strain YCH46)</name>
    <dbReference type="NCBI Taxonomy" id="295405"/>
    <lineage>
        <taxon>Bacteria</taxon>
        <taxon>Pseudomonadati</taxon>
        <taxon>Bacteroidota</taxon>
        <taxon>Bacteroidia</taxon>
        <taxon>Bacteroidales</taxon>
        <taxon>Bacteroidaceae</taxon>
        <taxon>Bacteroides</taxon>
    </lineage>
</organism>